<keyword id="KW-0997">Cell inner membrane</keyword>
<keyword id="KW-1003">Cell membrane</keyword>
<keyword id="KW-0201">Cytochrome c-type biogenesis</keyword>
<keyword id="KW-0472">Membrane</keyword>
<keyword id="KW-1185">Reference proteome</keyword>
<keyword id="KW-0812">Transmembrane</keyword>
<keyword id="KW-1133">Transmembrane helix</keyword>
<keyword id="KW-0813">Transport</keyword>
<proteinExistence type="inferred from homology"/>
<accession>Q9I3N6</accession>
<organism>
    <name type="scientific">Pseudomonas aeruginosa (strain ATCC 15692 / DSM 22644 / CIP 104116 / JCM 14847 / LMG 12228 / 1C / PRS 101 / PAO1)</name>
    <dbReference type="NCBI Taxonomy" id="208964"/>
    <lineage>
        <taxon>Bacteria</taxon>
        <taxon>Pseudomonadati</taxon>
        <taxon>Pseudomonadota</taxon>
        <taxon>Gammaproteobacteria</taxon>
        <taxon>Pseudomonadales</taxon>
        <taxon>Pseudomonadaceae</taxon>
        <taxon>Pseudomonas</taxon>
    </lineage>
</organism>
<comment type="function">
    <text evidence="1">Required for the export of heme to the periplasm for the biogenesis of c-type cytochromes.</text>
</comment>
<comment type="subcellular location">
    <subcellularLocation>
        <location evidence="1">Cell inner membrane</location>
        <topology evidence="1">Multi-pass membrane protein</topology>
    </subcellularLocation>
</comment>
<comment type="similarity">
    <text evidence="3">Belongs to the CcmB/CycW/HelB family.</text>
</comment>
<sequence length="223" mass="23398">MSNVFSLLLAREARLLFRRPAELANPLVFFAIVIALFPLAVGPESQLLQTLSPGLVWVAALLAVLLSLEGLFRSDFEDGSMEQWVLSPHPLALLVLAKVLAHWLFSGLALVLMSPLFALMLGLPARCIPVLLLSLLLGTPVLSLLGAVGAALTVGLKRGGLLLALLILPLYIPVLILGSGALQASLQGLPSSGHLLWLASLTALALTLTPFAIAAGLKISVGE</sequence>
<name>CCMB_PSEAE</name>
<reference key="1">
    <citation type="journal article" date="2000" name="Nature">
        <title>Complete genome sequence of Pseudomonas aeruginosa PAO1, an opportunistic pathogen.</title>
        <authorList>
            <person name="Stover C.K."/>
            <person name="Pham X.-Q.T."/>
            <person name="Erwin A.L."/>
            <person name="Mizoguchi S.D."/>
            <person name="Warrener P."/>
            <person name="Hickey M.J."/>
            <person name="Brinkman F.S.L."/>
            <person name="Hufnagle W.O."/>
            <person name="Kowalik D.J."/>
            <person name="Lagrou M."/>
            <person name="Garber R.L."/>
            <person name="Goltry L."/>
            <person name="Tolentino E."/>
            <person name="Westbrock-Wadman S."/>
            <person name="Yuan Y."/>
            <person name="Brody L.L."/>
            <person name="Coulter S.N."/>
            <person name="Folger K.R."/>
            <person name="Kas A."/>
            <person name="Larbig K."/>
            <person name="Lim R.M."/>
            <person name="Smith K.A."/>
            <person name="Spencer D.H."/>
            <person name="Wong G.K.-S."/>
            <person name="Wu Z."/>
            <person name="Paulsen I.T."/>
            <person name="Reizer J."/>
            <person name="Saier M.H. Jr."/>
            <person name="Hancock R.E.W."/>
            <person name="Lory S."/>
            <person name="Olson M.V."/>
        </authorList>
    </citation>
    <scope>NUCLEOTIDE SEQUENCE [LARGE SCALE GENOMIC DNA]</scope>
    <source>
        <strain>ATCC 15692 / DSM 22644 / CIP 104116 / JCM 14847 / LMG 12228 / 1C / PRS 101 / PAO1</strain>
    </source>
</reference>
<evidence type="ECO:0000250" key="1"/>
<evidence type="ECO:0000255" key="2"/>
<evidence type="ECO:0000305" key="3"/>
<feature type="chain" id="PRO_0000287761" description="Heme exporter protein B">
    <location>
        <begin position="1"/>
        <end position="223"/>
    </location>
</feature>
<feature type="transmembrane region" description="Helical" evidence="2">
    <location>
        <begin position="23"/>
        <end position="43"/>
    </location>
</feature>
<feature type="transmembrane region" description="Helical" evidence="2">
    <location>
        <begin position="52"/>
        <end position="72"/>
    </location>
</feature>
<feature type="transmembrane region" description="Helical" evidence="2">
    <location>
        <begin position="103"/>
        <end position="123"/>
    </location>
</feature>
<feature type="transmembrane region" description="Helical" evidence="2">
    <location>
        <begin position="128"/>
        <end position="148"/>
    </location>
</feature>
<feature type="transmembrane region" description="Helical" evidence="2">
    <location>
        <begin position="161"/>
        <end position="181"/>
    </location>
</feature>
<feature type="transmembrane region" description="Helical" evidence="2">
    <location>
        <begin position="195"/>
        <end position="215"/>
    </location>
</feature>
<gene>
    <name type="primary">ccmB</name>
    <name type="ordered locus">PA1476</name>
</gene>
<dbReference type="EMBL" id="AE004091">
    <property type="protein sequence ID" value="AAG04865.1"/>
    <property type="molecule type" value="Genomic_DNA"/>
</dbReference>
<dbReference type="PIR" id="H83462">
    <property type="entry name" value="H83462"/>
</dbReference>
<dbReference type="RefSeq" id="NP_250167.1">
    <property type="nucleotide sequence ID" value="NC_002516.2"/>
</dbReference>
<dbReference type="RefSeq" id="WP_003114289.1">
    <property type="nucleotide sequence ID" value="NZ_QZGE01000005.1"/>
</dbReference>
<dbReference type="SMR" id="Q9I3N6"/>
<dbReference type="FunCoup" id="Q9I3N6">
    <property type="interactions" value="461"/>
</dbReference>
<dbReference type="STRING" id="208964.PA1476"/>
<dbReference type="PaxDb" id="208964-PA1476"/>
<dbReference type="DNASU" id="880948"/>
<dbReference type="GeneID" id="880948"/>
<dbReference type="KEGG" id="pae:PA1476"/>
<dbReference type="PATRIC" id="fig|208964.12.peg.1527"/>
<dbReference type="PseudoCAP" id="PA1476"/>
<dbReference type="HOGENOM" id="CLU_079069_1_0_6"/>
<dbReference type="InParanoid" id="Q9I3N6"/>
<dbReference type="OrthoDB" id="9799895at2"/>
<dbReference type="PhylomeDB" id="Q9I3N6"/>
<dbReference type="BioCyc" id="PAER208964:G1FZ6-1502-MONOMER"/>
<dbReference type="Proteomes" id="UP000002438">
    <property type="component" value="Chromosome"/>
</dbReference>
<dbReference type="GO" id="GO:0005886">
    <property type="term" value="C:plasma membrane"/>
    <property type="evidence" value="ECO:0000318"/>
    <property type="project" value="GO_Central"/>
</dbReference>
<dbReference type="GO" id="GO:0015232">
    <property type="term" value="F:heme transmembrane transporter activity"/>
    <property type="evidence" value="ECO:0007669"/>
    <property type="project" value="InterPro"/>
</dbReference>
<dbReference type="GO" id="GO:1903607">
    <property type="term" value="P:cytochrome c biosynthetic process"/>
    <property type="evidence" value="ECO:0000318"/>
    <property type="project" value="GO_Central"/>
</dbReference>
<dbReference type="GO" id="GO:0017004">
    <property type="term" value="P:cytochrome complex assembly"/>
    <property type="evidence" value="ECO:0007669"/>
    <property type="project" value="UniProtKB-KW"/>
</dbReference>
<dbReference type="InterPro" id="IPR003544">
    <property type="entry name" value="Cyt_c_biogenesis_CcmB"/>
</dbReference>
<dbReference type="InterPro" id="IPR026031">
    <property type="entry name" value="Cyt_c_CcmB_bac"/>
</dbReference>
<dbReference type="NCBIfam" id="TIGR01190">
    <property type="entry name" value="ccmB"/>
    <property type="match status" value="1"/>
</dbReference>
<dbReference type="PANTHER" id="PTHR30070:SF1">
    <property type="entry name" value="CYTOCHROME C BIOGENESIS B-RELATED"/>
    <property type="match status" value="1"/>
</dbReference>
<dbReference type="PANTHER" id="PTHR30070">
    <property type="entry name" value="HEME EXPORTER PROTEIN B"/>
    <property type="match status" value="1"/>
</dbReference>
<dbReference type="Pfam" id="PF03379">
    <property type="entry name" value="CcmB"/>
    <property type="match status" value="1"/>
</dbReference>
<dbReference type="PIRSF" id="PIRSF002764">
    <property type="entry name" value="CcmB"/>
    <property type="match status" value="1"/>
</dbReference>
<dbReference type="PRINTS" id="PR01414">
    <property type="entry name" value="CCMBBIOGNSIS"/>
</dbReference>
<protein>
    <recommendedName>
        <fullName>Heme exporter protein B</fullName>
    </recommendedName>
    <alternativeName>
        <fullName>Cytochrome c-type biogenesis protein CcmB</fullName>
    </alternativeName>
</protein>